<proteinExistence type="inferred from homology"/>
<comment type="function">
    <text evidence="1">Catalyzes the conversion of dethiobiotin (DTB) to biotin by the insertion of a sulfur atom into dethiobiotin via a radical-based mechanism.</text>
</comment>
<comment type="catalytic activity">
    <reaction evidence="1">
        <text>(4R,5S)-dethiobiotin + (sulfur carrier)-SH + 2 reduced [2Fe-2S]-[ferredoxin] + 2 S-adenosyl-L-methionine = (sulfur carrier)-H + biotin + 2 5'-deoxyadenosine + 2 L-methionine + 2 oxidized [2Fe-2S]-[ferredoxin]</text>
        <dbReference type="Rhea" id="RHEA:22060"/>
        <dbReference type="Rhea" id="RHEA-COMP:10000"/>
        <dbReference type="Rhea" id="RHEA-COMP:10001"/>
        <dbReference type="Rhea" id="RHEA-COMP:14737"/>
        <dbReference type="Rhea" id="RHEA-COMP:14739"/>
        <dbReference type="ChEBI" id="CHEBI:17319"/>
        <dbReference type="ChEBI" id="CHEBI:29917"/>
        <dbReference type="ChEBI" id="CHEBI:33737"/>
        <dbReference type="ChEBI" id="CHEBI:33738"/>
        <dbReference type="ChEBI" id="CHEBI:57586"/>
        <dbReference type="ChEBI" id="CHEBI:57844"/>
        <dbReference type="ChEBI" id="CHEBI:59789"/>
        <dbReference type="ChEBI" id="CHEBI:64428"/>
        <dbReference type="ChEBI" id="CHEBI:149473"/>
        <dbReference type="EC" id="2.8.1.6"/>
    </reaction>
</comment>
<comment type="cofactor">
    <cofactor evidence="1">
        <name>[4Fe-4S] cluster</name>
        <dbReference type="ChEBI" id="CHEBI:49883"/>
    </cofactor>
    <text evidence="1">Binds 1 [4Fe-4S] cluster. The cluster is coordinated with 3 cysteines and an exchangeable S-adenosyl-L-methionine.</text>
</comment>
<comment type="cofactor">
    <cofactor evidence="1">
        <name>[2Fe-2S] cluster</name>
        <dbReference type="ChEBI" id="CHEBI:190135"/>
    </cofactor>
    <text evidence="1">Binds 1 [2Fe-2S] cluster. The cluster is coordinated with 3 cysteines and 1 arginine.</text>
</comment>
<comment type="pathway">
    <text evidence="1">Cofactor biosynthesis; biotin biosynthesis; biotin from 7,8-diaminononanoate: step 2/2.</text>
</comment>
<comment type="subunit">
    <text evidence="1">Homodimer.</text>
</comment>
<comment type="similarity">
    <text evidence="1">Belongs to the radical SAM superfamily. Biotin synthase family.</text>
</comment>
<protein>
    <recommendedName>
        <fullName evidence="1">Biotin synthase</fullName>
        <ecNumber evidence="1">2.8.1.6</ecNumber>
    </recommendedName>
</protein>
<accession>B2UNW0</accession>
<evidence type="ECO:0000255" key="1">
    <source>
        <dbReference type="HAMAP-Rule" id="MF_01694"/>
    </source>
</evidence>
<evidence type="ECO:0000255" key="2">
    <source>
        <dbReference type="PROSITE-ProRule" id="PRU01266"/>
    </source>
</evidence>
<name>BIOB_AKKM8</name>
<gene>
    <name evidence="1" type="primary">bioB</name>
    <name type="ordered locus">Amuc_0492</name>
</gene>
<feature type="chain" id="PRO_0000381189" description="Biotin synthase">
    <location>
        <begin position="1"/>
        <end position="321"/>
    </location>
</feature>
<feature type="domain" description="Radical SAM core" evidence="2">
    <location>
        <begin position="44"/>
        <end position="273"/>
    </location>
</feature>
<feature type="binding site" evidence="1">
    <location>
        <position position="62"/>
    </location>
    <ligand>
        <name>[4Fe-4S] cluster</name>
        <dbReference type="ChEBI" id="CHEBI:49883"/>
        <note>4Fe-4S-S-AdoMet</note>
    </ligand>
</feature>
<feature type="binding site" evidence="1">
    <location>
        <position position="66"/>
    </location>
    <ligand>
        <name>[4Fe-4S] cluster</name>
        <dbReference type="ChEBI" id="CHEBI:49883"/>
        <note>4Fe-4S-S-AdoMet</note>
    </ligand>
</feature>
<feature type="binding site" evidence="1">
    <location>
        <position position="69"/>
    </location>
    <ligand>
        <name>[4Fe-4S] cluster</name>
        <dbReference type="ChEBI" id="CHEBI:49883"/>
        <note>4Fe-4S-S-AdoMet</note>
    </ligand>
</feature>
<feature type="binding site" evidence="1">
    <location>
        <position position="106"/>
    </location>
    <ligand>
        <name>[2Fe-2S] cluster</name>
        <dbReference type="ChEBI" id="CHEBI:190135"/>
    </ligand>
</feature>
<feature type="binding site" evidence="1">
    <location>
        <position position="138"/>
    </location>
    <ligand>
        <name>[2Fe-2S] cluster</name>
        <dbReference type="ChEBI" id="CHEBI:190135"/>
    </ligand>
</feature>
<feature type="binding site" evidence="1">
    <location>
        <position position="198"/>
    </location>
    <ligand>
        <name>[2Fe-2S] cluster</name>
        <dbReference type="ChEBI" id="CHEBI:190135"/>
    </ligand>
</feature>
<feature type="binding site" evidence="1">
    <location>
        <position position="268"/>
    </location>
    <ligand>
        <name>[2Fe-2S] cluster</name>
        <dbReference type="ChEBI" id="CHEBI:190135"/>
    </ligand>
</feature>
<sequence length="321" mass="35189">MSLTSSLLSRVLGGGSCSREELIALSREPLEELCQAANAIREHFCGNVFDLCTIINGRSGKCSENCKYCAQSAHYSTAVEEYPLLSDEALLAGARYNDARGILRYSIVTSGKRLTDEDVDRLCASYRHIAEHCGISLCASHGLISKKHCEQLKAAGVSRYHNNLETSRRNFPNVCTTHTYDDKLQTIKWALEAGLEVCSGGIMGLGETMEDRIDMYMDIAALGIKSMPVNFLTPIPGTPYADMTPLGEEEQLRIVALVRFIMPDGFVRIAAGRNTMKDHGRKIFMSGANAAISGDMLTTAGVTIREDLAMLAELGYEVRMK</sequence>
<dbReference type="EC" id="2.8.1.6" evidence="1"/>
<dbReference type="EMBL" id="CP001071">
    <property type="protein sequence ID" value="ACD04330.1"/>
    <property type="molecule type" value="Genomic_DNA"/>
</dbReference>
<dbReference type="RefSeq" id="WP_012419545.1">
    <property type="nucleotide sequence ID" value="NZ_CP071807.1"/>
</dbReference>
<dbReference type="SMR" id="B2UNW0"/>
<dbReference type="STRING" id="349741.Amuc_0492"/>
<dbReference type="PaxDb" id="349741-Amuc_0492"/>
<dbReference type="KEGG" id="amu:Amuc_0492"/>
<dbReference type="eggNOG" id="COG0502">
    <property type="taxonomic scope" value="Bacteria"/>
</dbReference>
<dbReference type="HOGENOM" id="CLU_033172_2_1_0"/>
<dbReference type="OrthoDB" id="9786826at2"/>
<dbReference type="BioCyc" id="AMUC349741:G1GBX-541-MONOMER"/>
<dbReference type="UniPathway" id="UPA00078">
    <property type="reaction ID" value="UER00162"/>
</dbReference>
<dbReference type="Proteomes" id="UP000001031">
    <property type="component" value="Chromosome"/>
</dbReference>
<dbReference type="GO" id="GO:0051537">
    <property type="term" value="F:2 iron, 2 sulfur cluster binding"/>
    <property type="evidence" value="ECO:0007669"/>
    <property type="project" value="UniProtKB-KW"/>
</dbReference>
<dbReference type="GO" id="GO:0051539">
    <property type="term" value="F:4 iron, 4 sulfur cluster binding"/>
    <property type="evidence" value="ECO:0007669"/>
    <property type="project" value="UniProtKB-KW"/>
</dbReference>
<dbReference type="GO" id="GO:0004076">
    <property type="term" value="F:biotin synthase activity"/>
    <property type="evidence" value="ECO:0007669"/>
    <property type="project" value="UniProtKB-UniRule"/>
</dbReference>
<dbReference type="GO" id="GO:0005506">
    <property type="term" value="F:iron ion binding"/>
    <property type="evidence" value="ECO:0007669"/>
    <property type="project" value="UniProtKB-UniRule"/>
</dbReference>
<dbReference type="GO" id="GO:0009102">
    <property type="term" value="P:biotin biosynthetic process"/>
    <property type="evidence" value="ECO:0007669"/>
    <property type="project" value="UniProtKB-UniRule"/>
</dbReference>
<dbReference type="CDD" id="cd01335">
    <property type="entry name" value="Radical_SAM"/>
    <property type="match status" value="1"/>
</dbReference>
<dbReference type="FunFam" id="3.20.20.70:FF:000026">
    <property type="entry name" value="Biotin synthase"/>
    <property type="match status" value="1"/>
</dbReference>
<dbReference type="Gene3D" id="3.20.20.70">
    <property type="entry name" value="Aldolase class I"/>
    <property type="match status" value="1"/>
</dbReference>
<dbReference type="HAMAP" id="MF_01694">
    <property type="entry name" value="BioB"/>
    <property type="match status" value="1"/>
</dbReference>
<dbReference type="InterPro" id="IPR013785">
    <property type="entry name" value="Aldolase_TIM"/>
</dbReference>
<dbReference type="InterPro" id="IPR010722">
    <property type="entry name" value="BATS_dom"/>
</dbReference>
<dbReference type="InterPro" id="IPR002684">
    <property type="entry name" value="Biotin_synth/BioAB"/>
</dbReference>
<dbReference type="InterPro" id="IPR024177">
    <property type="entry name" value="Biotin_synthase"/>
</dbReference>
<dbReference type="InterPro" id="IPR006638">
    <property type="entry name" value="Elp3/MiaA/NifB-like_rSAM"/>
</dbReference>
<dbReference type="InterPro" id="IPR007197">
    <property type="entry name" value="rSAM"/>
</dbReference>
<dbReference type="NCBIfam" id="TIGR00433">
    <property type="entry name" value="bioB"/>
    <property type="match status" value="1"/>
</dbReference>
<dbReference type="PANTHER" id="PTHR22976">
    <property type="entry name" value="BIOTIN SYNTHASE"/>
    <property type="match status" value="1"/>
</dbReference>
<dbReference type="PANTHER" id="PTHR22976:SF2">
    <property type="entry name" value="BIOTIN SYNTHASE, MITOCHONDRIAL"/>
    <property type="match status" value="1"/>
</dbReference>
<dbReference type="Pfam" id="PF06968">
    <property type="entry name" value="BATS"/>
    <property type="match status" value="1"/>
</dbReference>
<dbReference type="Pfam" id="PF04055">
    <property type="entry name" value="Radical_SAM"/>
    <property type="match status" value="1"/>
</dbReference>
<dbReference type="PIRSF" id="PIRSF001619">
    <property type="entry name" value="Biotin_synth"/>
    <property type="match status" value="1"/>
</dbReference>
<dbReference type="SFLD" id="SFLDG01278">
    <property type="entry name" value="biotin_synthase_like"/>
    <property type="match status" value="1"/>
</dbReference>
<dbReference type="SFLD" id="SFLDS00029">
    <property type="entry name" value="Radical_SAM"/>
    <property type="match status" value="1"/>
</dbReference>
<dbReference type="SMART" id="SM00876">
    <property type="entry name" value="BATS"/>
    <property type="match status" value="1"/>
</dbReference>
<dbReference type="SMART" id="SM00729">
    <property type="entry name" value="Elp3"/>
    <property type="match status" value="1"/>
</dbReference>
<dbReference type="SUPFAM" id="SSF102114">
    <property type="entry name" value="Radical SAM enzymes"/>
    <property type="match status" value="1"/>
</dbReference>
<dbReference type="PROSITE" id="PS51918">
    <property type="entry name" value="RADICAL_SAM"/>
    <property type="match status" value="1"/>
</dbReference>
<organism>
    <name type="scientific">Akkermansia muciniphila (strain ATCC BAA-835 / DSM 22959 / JCM 33894 / BCRC 81048 / CCUG 64013 / CIP 107961 / Muc)</name>
    <dbReference type="NCBI Taxonomy" id="349741"/>
    <lineage>
        <taxon>Bacteria</taxon>
        <taxon>Pseudomonadati</taxon>
        <taxon>Verrucomicrobiota</taxon>
        <taxon>Verrucomicrobiia</taxon>
        <taxon>Verrucomicrobiales</taxon>
        <taxon>Akkermansiaceae</taxon>
        <taxon>Akkermansia</taxon>
    </lineage>
</organism>
<keyword id="KW-0001">2Fe-2S</keyword>
<keyword id="KW-0004">4Fe-4S</keyword>
<keyword id="KW-0093">Biotin biosynthesis</keyword>
<keyword id="KW-0408">Iron</keyword>
<keyword id="KW-0411">Iron-sulfur</keyword>
<keyword id="KW-0479">Metal-binding</keyword>
<keyword id="KW-1185">Reference proteome</keyword>
<keyword id="KW-0949">S-adenosyl-L-methionine</keyword>
<keyword id="KW-0808">Transferase</keyword>
<reference key="1">
    <citation type="journal article" date="2011" name="PLoS ONE">
        <title>The genome of Akkermansia muciniphila, a dedicated intestinal mucin degrader, and its use in exploring intestinal metagenomes.</title>
        <authorList>
            <person name="van Passel M.W."/>
            <person name="Kant R."/>
            <person name="Zoetendal E.G."/>
            <person name="Plugge C.M."/>
            <person name="Derrien M."/>
            <person name="Malfatti S.A."/>
            <person name="Chain P.S."/>
            <person name="Woyke T."/>
            <person name="Palva A."/>
            <person name="de Vos W.M."/>
            <person name="Smidt H."/>
        </authorList>
    </citation>
    <scope>NUCLEOTIDE SEQUENCE [LARGE SCALE GENOMIC DNA]</scope>
    <source>
        <strain>ATCC BAA-835 / DSM 22959 / JCM 33894 / BCRC 81048 / CCUG 64013 / CIP 107961 / Muc</strain>
    </source>
</reference>